<feature type="signal peptide" evidence="1">
    <location>
        <begin position="1"/>
        <end position="15"/>
    </location>
</feature>
<feature type="chain" id="PRO_0000041750" description="pH-regulated antigen PRA1">
    <location>
        <begin position="16"/>
        <end position="299"/>
    </location>
</feature>
<feature type="region of interest" description="Disordered" evidence="2">
    <location>
        <begin position="253"/>
        <end position="299"/>
    </location>
</feature>
<feature type="compositionally biased region" description="Low complexity" evidence="2">
    <location>
        <begin position="259"/>
        <end position="272"/>
    </location>
</feature>
<feature type="compositionally biased region" description="Polar residues" evidence="2">
    <location>
        <begin position="278"/>
        <end position="288"/>
    </location>
</feature>
<feature type="glycosylation site" description="N-linked (GlcNAc...) asparagine" evidence="1">
    <location>
        <position position="48"/>
    </location>
</feature>
<feature type="glycosylation site" description="N-linked (GlcNAc...) asparagine" evidence="1">
    <location>
        <position position="89"/>
    </location>
</feature>
<feature type="glycosylation site" description="N-linked (GlcNAc...) asparagine" evidence="1">
    <location>
        <position position="135"/>
    </location>
</feature>
<feature type="glycosylation site" description="N-linked (GlcNAc...) asparagine" evidence="1">
    <location>
        <position position="208"/>
    </location>
</feature>
<feature type="sequence conflict" description="In Ref. 5; AAC49898." evidence="24" ref="5">
    <original>L</original>
    <variation>F</variation>
    <location>
        <position position="8"/>
    </location>
</feature>
<feature type="sequence conflict" description="In Ref. 1; AAC00525." evidence="24" ref="1">
    <original>D</original>
    <variation>N</variation>
    <location>
        <position position="25"/>
    </location>
</feature>
<feature type="sequence conflict" description="In Ref. 1; AAC00525." evidence="24" ref="1">
    <original>E</original>
    <variation>D</variation>
    <location>
        <position position="90"/>
    </location>
</feature>
<feature type="sequence conflict" description="In Ref. 1; AAC00525 and 5; AAC49898." evidence="24" ref="1 5">
    <original>D</original>
    <variation>E</variation>
    <location>
        <position position="101"/>
    </location>
</feature>
<feature type="sequence conflict" description="In Ref. 5; AAC49898." evidence="24" ref="5">
    <original>G</original>
    <variation>D</variation>
    <location>
        <position position="105"/>
    </location>
</feature>
<feature type="sequence conflict" description="In Ref. 1; AAC00525 and 5; AAC49898." evidence="24" ref="1 5">
    <original>T</original>
    <variation>S</variation>
    <location>
        <position position="154"/>
    </location>
</feature>
<feature type="sequence conflict" description="In Ref. 1; AAC00525 and 5; AAC49898." evidence="24" ref="1 5">
    <original>S</original>
    <variation>G</variation>
    <location>
        <position position="159"/>
    </location>
</feature>
<accession>P87020</accession>
<accession>A0A1D8PMQ8</accession>
<accession>P78598</accession>
<accession>Q5A0Y5</accession>
<accession>Q5A156</accession>
<proteinExistence type="evidence at protein level"/>
<keyword id="KW-0325">Glycoprotein</keyword>
<keyword id="KW-1185">Reference proteome</keyword>
<keyword id="KW-0964">Secreted</keyword>
<keyword id="KW-0732">Signal</keyword>
<keyword id="KW-0843">Virulence</keyword>
<comment type="function">
    <text evidence="6 9 10 11 12 13 14 15 16 17 21">Cell surface protein involved in the host-parasite interaction during candidal infection (PubMed:17277107, PubMed:19850343, PubMed:20504767, PubMed:20644161, PubMed:21212281, PubMed:21245270, PubMed:21820180, PubMed:22074954, PubMed:22761575, PubMed:22844116, PubMed:9440517). With MP65, represents a major component of the biofilm matrix (PubMed:17277107). As a surface protein, binds the two human complement regulators CFH and CFHR1, as well as plasminogen PLG, mediates complement evasion and extra-cellular matrix interaction and/or degradation (PubMed:19850343, PubMed:20504767). As a released protein, enhances complement control in direct vicinity of the yeast and thus generates an additional protective layer which controls host complement attack, assisting the fungus in escaping host surveillance (PubMed:17277107, PubMed:19850343). Binds to host fluid-phase C3 and blocks cleavage of C3 to C3a and C3b, leading to inhibition of complement activation and protection from uptake of C.albicans by human macrophages (PubMed:20644161). Also mediates human complement control and complement evasion through binding to C4BPA, another human complement inhibitor, as well as through binding to host integrin alpha-M/beta-2 (PubMed:21212281, PubMed:21245270, PubMed:21820180, PubMed:22844116). Binds zinc from its environment and then reassociates with ZRT1 to acquire this essential metal (PubMed:22761575).</text>
</comment>
<comment type="subunit">
    <text evidence="6 9 11 12 13 16">Component of a multiprotein complex of 250 kDa composed of at least HYR1, MP65, and PRA1 (PubMed:17277107). Interacts with host Integrin alpha-M/beta-2 heterodimer (PubMed:17277107). Also binds human factor H (CFH), CFHR1, plasminogen (PLG), complement C3, and C4BPA (PubMed:19850343, PubMed:20644161, PubMed:21212281, PubMed:21245270). Interacts with ZRT101 (PubMed:22761575).</text>
</comment>
<comment type="subcellular location">
    <subcellularLocation>
        <location evidence="4 6 7 8 15 18 19 20 21">Secreted</location>
    </subcellularLocation>
    <text evidence="19">Found primarily on the cell surface of filamentous forms and enriched at hyphal tips.</text>
</comment>
<comment type="induction">
    <text evidence="3 5 21">Differentially expressed in response to changes in the pH with aximal expression at neutral pH and no expression detected below pH 6.0 (PubMed:9440517). Expression is controlled by RIM101 (PubMed:10629054). Expression is also increased during adhesion onto human epithelia (PubMed:17042758).</text>
</comment>
<comment type="PTM">
    <text evidence="4 8 21">N- and O-glycosylated. The N- and 0-glycosidically linked carbohydrates represent 18 to 20 percent and 3 to 4 percent, respectively, of the molecular mass of PRA1. 0-linked sugar residues may be involved in the interaction with fibrinogen. Contributes highly to the carbohydrate component of the matrix. Treatment with tunicamycin impairs glycosylation.</text>
</comment>
<comment type="disruption phenotype">
    <text evidence="13 16 21">Impairs hypha formation. Protects the fungus against leukocyte killing in vitro and in vivo, impedes the innate immune response to the infection, and increases fungal virulence and organ invasion in vivo (PubMed:21245270, PubMed:9440517). Prevents utilization of host zinc and damage of host cells in the absence of exogenous zinc (PubMed:22761575).</text>
</comment>
<comment type="similarity">
    <text evidence="24">Belongs to the ZPS1 family.</text>
</comment>
<evidence type="ECO:0000255" key="1"/>
<evidence type="ECO:0000256" key="2">
    <source>
        <dbReference type="SAM" id="MobiDB-lite"/>
    </source>
</evidence>
<evidence type="ECO:0000269" key="3">
    <source>
    </source>
</evidence>
<evidence type="ECO:0000269" key="4">
    <source>
    </source>
</evidence>
<evidence type="ECO:0000269" key="5">
    <source>
    </source>
</evidence>
<evidence type="ECO:0000269" key="6">
    <source>
    </source>
</evidence>
<evidence type="ECO:0000269" key="7">
    <source>
    </source>
</evidence>
<evidence type="ECO:0000269" key="8">
    <source>
    </source>
</evidence>
<evidence type="ECO:0000269" key="9">
    <source>
    </source>
</evidence>
<evidence type="ECO:0000269" key="10">
    <source>
    </source>
</evidence>
<evidence type="ECO:0000269" key="11">
    <source>
    </source>
</evidence>
<evidence type="ECO:0000269" key="12">
    <source>
    </source>
</evidence>
<evidence type="ECO:0000269" key="13">
    <source>
    </source>
</evidence>
<evidence type="ECO:0000269" key="14">
    <source>
    </source>
</evidence>
<evidence type="ECO:0000269" key="15">
    <source>
    </source>
</evidence>
<evidence type="ECO:0000269" key="16">
    <source>
    </source>
</evidence>
<evidence type="ECO:0000269" key="17">
    <source>
    </source>
</evidence>
<evidence type="ECO:0000269" key="18">
    <source>
    </source>
</evidence>
<evidence type="ECO:0000269" key="19">
    <source>
    </source>
</evidence>
<evidence type="ECO:0000269" key="20">
    <source>
    </source>
</evidence>
<evidence type="ECO:0000269" key="21">
    <source>
    </source>
</evidence>
<evidence type="ECO:0000303" key="22">
    <source>
    </source>
</evidence>
<evidence type="ECO:0000303" key="23">
    <source>
    </source>
</evidence>
<evidence type="ECO:0000305" key="24"/>
<protein>
    <recommendedName>
        <fullName evidence="23">pH-regulated antigen PRA1</fullName>
    </recommendedName>
    <alternativeName>
        <fullName evidence="22">58 kDa fibrinogen-binding mannoprotein</fullName>
    </alternativeName>
</protein>
<gene>
    <name evidence="23" type="primary">PRA1</name>
    <name evidence="22" type="synonym">FBP1</name>
    <name type="ordered locus">CAALFM_C406980WA</name>
    <name type="ORF">CaO19.10623</name>
    <name type="ORF">CaO19.3111</name>
</gene>
<reference key="1">
    <citation type="journal article" date="1998" name="J. Bacteriol.">
        <title>Cloning and characterization of PRA1, a gene encoding a novel pH-regulated antigen of Candida albicans.</title>
        <authorList>
            <person name="Sentandreu M."/>
            <person name="Elorza M.V."/>
            <person name="Sentandreu R."/>
            <person name="Fonzi W.A."/>
        </authorList>
    </citation>
    <scope>NUCLEOTIDE SEQUENCE [GENOMIC DNA]</scope>
    <scope>INDUCTION</scope>
    <scope>FUNCTION</scope>
    <scope>DISRUPTION PHENOTYPE</scope>
    <scope>SUBCELLULAR LOCATION</scope>
    <scope>GLYCOSYLATION</scope>
    <source>
        <strain>SC5314 / ATCC MYA-2876</strain>
    </source>
</reference>
<reference key="2">
    <citation type="journal article" date="2004" name="Proc. Natl. Acad. Sci. U.S.A.">
        <title>The diploid genome sequence of Candida albicans.</title>
        <authorList>
            <person name="Jones T."/>
            <person name="Federspiel N.A."/>
            <person name="Chibana H."/>
            <person name="Dungan J."/>
            <person name="Kalman S."/>
            <person name="Magee B.B."/>
            <person name="Newport G."/>
            <person name="Thorstenson Y.R."/>
            <person name="Agabian N."/>
            <person name="Magee P.T."/>
            <person name="Davis R.W."/>
            <person name="Scherer S."/>
        </authorList>
    </citation>
    <scope>NUCLEOTIDE SEQUENCE [LARGE SCALE GENOMIC DNA]</scope>
    <source>
        <strain>SC5314 / ATCC MYA-2876</strain>
    </source>
</reference>
<reference key="3">
    <citation type="journal article" date="2007" name="Genome Biol.">
        <title>Assembly of the Candida albicans genome into sixteen supercontigs aligned on the eight chromosomes.</title>
        <authorList>
            <person name="van het Hoog M."/>
            <person name="Rast T.J."/>
            <person name="Martchenko M."/>
            <person name="Grindle S."/>
            <person name="Dignard D."/>
            <person name="Hogues H."/>
            <person name="Cuomo C."/>
            <person name="Berriman M."/>
            <person name="Scherer S."/>
            <person name="Magee B.B."/>
            <person name="Whiteway M."/>
            <person name="Chibana H."/>
            <person name="Nantel A."/>
            <person name="Magee P.T."/>
        </authorList>
    </citation>
    <scope>GENOME REANNOTATION</scope>
    <source>
        <strain>SC5314 / ATCC MYA-2876</strain>
    </source>
</reference>
<reference key="4">
    <citation type="journal article" date="2013" name="Genome Biol.">
        <title>Assembly of a phased diploid Candida albicans genome facilitates allele-specific measurements and provides a simple model for repeat and indel structure.</title>
        <authorList>
            <person name="Muzzey D."/>
            <person name="Schwartz K."/>
            <person name="Weissman J.S."/>
            <person name="Sherlock G."/>
        </authorList>
    </citation>
    <scope>NUCLEOTIDE SEQUENCE [LARGE SCALE GENOMIC DNA]</scope>
    <scope>GENOME REANNOTATION</scope>
    <source>
        <strain>SC5314 / ATCC MYA-2876</strain>
    </source>
</reference>
<reference key="5">
    <citation type="journal article" date="1997" name="FEMS Microbiol. Lett.">
        <title>Cloning of a cDNA fragment encoding part of the protein moiety of the 58-kDa fibrinogen-binding mannoprotein of Candida albicans.</title>
        <authorList>
            <person name="Lopez-Ribot J.L."/>
            <person name="Sepulveda P."/>
            <person name="Cervera A.M."/>
            <person name="Roig P."/>
            <person name="Gozalbo D."/>
            <person name="Martinez J.P."/>
        </authorList>
    </citation>
    <scope>NUCLEOTIDE SEQUENCE [MRNA] OF 8-299</scope>
    <source>
        <strain>ATCC 26555</strain>
    </source>
</reference>
<reference key="6">
    <citation type="journal article" date="1992" name="Infect. Immun.">
        <title>Identification of a 58-kilodalton cell surface fibrinogen-binding mannoprotein from Candida albicans.</title>
        <authorList>
            <person name="Casanova M."/>
            <person name="Lopez-Ribot J.L."/>
            <person name="Monteagudo C."/>
            <person name="Llombart-Bosch A."/>
            <person name="Sentandreu R."/>
            <person name="Martinez J.P."/>
        </authorList>
    </citation>
    <scope>IDENTIFICATION</scope>
    <scope>SUBCELLULAR LOCATION</scope>
    <scope>GLYCOSYLATION</scope>
    <scope>FIBRINOGEN-BINDING</scope>
</reference>
<reference key="7">
    <citation type="journal article" date="1994" name="Infect. Immun.">
        <title>Heterogeneous surface distribution of the fibrinogen-binding protein on Candida albicans.</title>
        <authorList>
            <person name="Martinez J.P."/>
            <person name="Lopez-Ribot J.L."/>
            <person name="Chaffin W.L."/>
        </authorList>
    </citation>
    <scope>SUBCELLULAR LOCATION</scope>
</reference>
<reference key="8">
    <citation type="journal article" date="1995" name="Infect. Immun.">
        <title>Comparative study of the C3d receptor and 58-kilodalton fibrinogen-binding mannoproteins of Candida albicans.</title>
        <authorList>
            <person name="Lopez-Ribot J.L."/>
            <person name="Martinez J.P."/>
            <person name="Chaffin W.L."/>
        </authorList>
    </citation>
    <scope>SUBCELLULAR LOCATION</scope>
</reference>
<reference key="9">
    <citation type="journal article" date="1996" name="FEMS Microbiol. Lett.">
        <title>Expression of the fibrinogen binding mannoprotein and the laminin receptor of Candida albicans in vitro and in infected tissues.</title>
        <authorList>
            <person name="Lopez-Ribot J.L."/>
            <person name="Monteagudo C."/>
            <person name="Sepulveda P."/>
            <person name="Casanova M."/>
            <person name="Martinez J.P."/>
            <person name="Chaffin W.L."/>
        </authorList>
    </citation>
    <scope>SUBCELLULAR LOCATION</scope>
</reference>
<reference key="10">
    <citation type="journal article" date="2000" name="Mol. Cell. Biol.">
        <title>RIM101-dependent and -independent pathways govern pH responses in Candida albicans.</title>
        <authorList>
            <person name="Davis D.A."/>
            <person name="Wilson R.B."/>
            <person name="Mitchell A.P."/>
        </authorList>
    </citation>
    <scope>INDUCTION</scope>
</reference>
<reference key="11">
    <citation type="journal article" date="2001" name="Infect. Immun.">
        <title>Identification of continuous B-cell epitopes on the protein moiety of the 58-kiloDalton cell wall mannoprotein of Candida albicans belonging to a family of immunodominant fungal antigens.</title>
        <authorList>
            <person name="Viudes A."/>
            <person name="Perea S."/>
            <person name="Lopez-Ribot J.L."/>
        </authorList>
    </citation>
    <scope>IDENTIFICATION AS A DOMINANT ANTIGEN</scope>
</reference>
<reference key="12">
    <citation type="journal article" date="2006" name="FEMS Yeast Res.">
        <title>An in vitro assay to study the transcriptional response during adherence of Candida albicans to different human epithelia.</title>
        <authorList>
            <person name="Sohn K."/>
            <person name="Senyurek I."/>
            <person name="Fertey J."/>
            <person name="Konigsdorfer A."/>
            <person name="Joffroy C."/>
            <person name="Hauser N."/>
            <person name="Zelt G."/>
            <person name="Brunner H."/>
            <person name="Rupp S."/>
        </authorList>
    </citation>
    <scope>INDUCTION</scope>
</reference>
<reference key="13">
    <citation type="journal article" date="2007" name="Eukaryot. Cell">
        <title>Candida albicans Sun41p, a putative glycosidase, is involved in morphogenesis, cell wall biogenesis, and biofilm formation.</title>
        <authorList>
            <person name="Hiller E."/>
            <person name="Heine S."/>
            <person name="Brunner H."/>
            <person name="Rupp S."/>
        </authorList>
    </citation>
    <scope>IDENTIFICATION BY MASS SPECTROMETRY</scope>
    <scope>SUBCELLULAR LOCATION</scope>
</reference>
<reference key="14">
    <citation type="journal article" date="2007" name="J. Immunol.">
        <title>Identification of pH-regulated antigen 1 released from Candida albicans as the major ligand for leukocyte integrin alphaMbeta2.</title>
        <authorList>
            <person name="Soloviev D.A."/>
            <person name="Fonzi W.A."/>
            <person name="Sentandreu R."/>
            <person name="Pluskota E."/>
            <person name="Forsyth C.B."/>
            <person name="Yadav S."/>
            <person name="Plow E.F."/>
        </authorList>
    </citation>
    <scope>IDENTIFICATION BY MASS SPECTROMETRY</scope>
    <scope>FUNCTION</scope>
    <scope>SUBCELLULAR LOCATION</scope>
    <scope>IDENTIFICATION IN A COMPLEX WITH MP65 AND HYR1</scope>
    <scope>INTERACTION WITH HUMAN INTEGRIN ALPHA-M/BETA-2</scope>
</reference>
<reference key="15">
    <citation type="journal article" date="2009" name="J. Antimicrob. Chemother.">
        <title>Effect of tunicamycin on Candida albicans biofilm formation and maintenance.</title>
        <authorList>
            <person name="Pierce C.G."/>
            <person name="Thomas D.P."/>
            <person name="Lopez-Ribot J.L."/>
        </authorList>
    </citation>
    <scope>SUBCELLULAR LOCATION</scope>
    <scope>GLYCOSYLATION</scope>
</reference>
<reference key="16">
    <citation type="journal article" date="2009" name="Mol. Immunol.">
        <title>Immune evasion of the human pathogenic yeast Candida albicans: Pra1 is a Factor H, FHL-1 and plasminogen binding surface protein.</title>
        <authorList>
            <person name="Luo S."/>
            <person name="Poltermann S."/>
            <person name="Kunert A."/>
            <person name="Rupp S."/>
            <person name="Zipfel P.F."/>
        </authorList>
    </citation>
    <scope>FUNCTION</scope>
    <scope>INTERACTION WITH HUMAN CFH; CFHR1 AND PLG</scope>
</reference>
<reference key="17">
    <citation type="journal article" date="2010" name="J. Biol. Chem.">
        <title>Complement regulator Factor H mediates a two-step uptake of Streptococcus pneumoniae by human cells.</title>
        <authorList>
            <person name="Agarwal V."/>
            <person name="Asmat T.M."/>
            <person name="Luo S."/>
            <person name="Jensch I."/>
            <person name="Zipfel P.F."/>
            <person name="Hammerschmidt S."/>
        </authorList>
    </citation>
    <scope>FUNCTION</scope>
</reference>
<reference key="18">
    <citation type="journal article" date="2010" name="J. Immunol.">
        <title>Secreted pH-regulated antigen 1 of Candida albicans blocks activation and conversion of complement C3.</title>
        <authorList>
            <person name="Luo S."/>
            <person name="Hartmann A."/>
            <person name="Dahse H.M."/>
            <person name="Skerka C."/>
            <person name="Zipfel P.F."/>
        </authorList>
    </citation>
    <scope>FUNCTION</scope>
    <scope>INTERACTION WITH HUMAN COMPLEMENT C3</scope>
</reference>
<reference key="19">
    <citation type="journal article" date="2011" name="Infect. Immun.">
        <title>Regulation of innate immune response to Candida albicans infections by alphaMbeta2-Pra1p interaction.</title>
        <authorList>
            <person name="Soloviev D.A."/>
            <person name="Jawhara S."/>
            <person name="Fonzi W.A."/>
        </authorList>
    </citation>
    <scope>FUNCTION</scope>
    <scope>DISRUPTION PHENOTYPE</scope>
    <scope>INTERACTION WITH HUMAN INTEGRIN ALPHA-M/BETA-2</scope>
</reference>
<reference key="20">
    <citation type="journal article" date="2011" name="J. Biol. Chem.">
        <title>The pH-regulated antigen 1 of Candida albicans binds the human complement inhibitor C4b-binding protein and mediates fungal complement evasion.</title>
        <authorList>
            <person name="Luo S."/>
            <person name="Blom A.M."/>
            <person name="Rupp S."/>
            <person name="Hipler U.C."/>
            <person name="Hube B."/>
            <person name="Skerka C."/>
            <person name="Zipfel P.F."/>
        </authorList>
    </citation>
    <scope>FUNCTION</scope>
    <scope>INTERACTION WITH HUMAN C4BPA</scope>
</reference>
<reference key="21">
    <citation type="journal article" date="2011" name="Mol. Immunol.">
        <title>Role of pH-regulated antigen 1 of Candida albicans in the fungal recognition and antifungal response of human neutrophils.</title>
        <authorList>
            <person name="Losse J."/>
            <person name="Svobodova E."/>
            <person name="Heyken A."/>
            <person name="Hube B."/>
            <person name="Zipfel P.F."/>
            <person name="Jozsi M."/>
        </authorList>
    </citation>
    <scope>FUNCTION</scope>
</reference>
<reference key="22">
    <citation type="journal article" date="2011" name="Peptides">
        <title>Molecular determinants of the interaction between human high molecular weight kininogen and Candida albicans cell wall: Identification of kininogen-binding proteins on fungal cell wall and mapping the cell wall-binding regions on kininogen molecule.</title>
        <authorList>
            <person name="Karkowska-Kuleta J."/>
            <person name="Kedracka-Krok S."/>
            <person name="Rapala-Kozik M."/>
            <person name="Kamysz W."/>
            <person name="Bielinska S."/>
            <person name="Karafova A."/>
            <person name="Kozik A."/>
        </authorList>
    </citation>
    <scope>IDENTIFICATION BY MASS SPECTROMETRY</scope>
    <scope>SUBCELLULAR LOCATION</scope>
    <scope>FUNCTION</scope>
</reference>
<reference key="23">
    <citation type="journal article" date="2012" name="J. Immunol.">
        <title>Integrin alphaXbeta(2) is a leukocyte receptor for Candida albicans and is essential for protection against fungal infections.</title>
        <authorList>
            <person name="Jawhara S."/>
            <person name="Pluskota E."/>
            <person name="Verbovetskiy D."/>
            <person name="Skomorovska-Prokvolit O."/>
            <person name="Plow E.F."/>
            <person name="Soloviev D.A."/>
        </authorList>
    </citation>
    <scope>FUNCTION</scope>
</reference>
<reference key="24">
    <citation type="journal article" date="2012" name="PLoS Pathog.">
        <title>Candida albicans scavenges host zinc via Pra1 during endothelial invasion.</title>
        <authorList>
            <person name="Citiulo F."/>
            <person name="Jacobsen I.D."/>
            <person name="Miramon P."/>
            <person name="Schild L."/>
            <person name="Brunke S."/>
            <person name="Zipfel P."/>
            <person name="Brock M."/>
            <person name="Hube B."/>
            <person name="Wilson D."/>
        </authorList>
    </citation>
    <scope>FUNCTION</scope>
    <scope>DISRUPTION PHENOTYPE</scope>
    <scope>INTERACTION WITH ZRT101</scope>
</reference>
<sequence length="299" mass="33159">MNYLLFCLFFAFSVAAPVTVTRFVDASPTGYDWRADWVKGFPIDSSCNATQYNQLSTGLQEAQLLAEHARDHTLRFGSKSPFFRKYFGNETASAEVVGHFDNVVGADKSSILFLCDDLDDKCKNDGWAGYWRGSNHSDQTIICDLSFVTRRYLTQLCSSGYTVSKSKTNIFWAGDLLHRFWHLKSIGQLVIEHYADTYEEVLELAQENSTYAVRNSNSLIYYALDVYAYDVTIPGEGCNGDGTSYKKSDFSSFEDSDSGSDSGASSTASSSHQHTDSNPSATTDANSHCHTHADGEVHC</sequence>
<name>PRA1_CANAL</name>
<organism>
    <name type="scientific">Candida albicans (strain SC5314 / ATCC MYA-2876)</name>
    <name type="common">Yeast</name>
    <dbReference type="NCBI Taxonomy" id="237561"/>
    <lineage>
        <taxon>Eukaryota</taxon>
        <taxon>Fungi</taxon>
        <taxon>Dikarya</taxon>
        <taxon>Ascomycota</taxon>
        <taxon>Saccharomycotina</taxon>
        <taxon>Pichiomycetes</taxon>
        <taxon>Debaryomycetaceae</taxon>
        <taxon>Candida/Lodderomyces clade</taxon>
        <taxon>Candida</taxon>
    </lineage>
</organism>
<dbReference type="EMBL" id="U84261">
    <property type="protein sequence ID" value="AAC00525.1"/>
    <property type="molecule type" value="Genomic_DNA"/>
</dbReference>
<dbReference type="EMBL" id="CP017626">
    <property type="protein sequence ID" value="AOW29419.1"/>
    <property type="molecule type" value="Genomic_DNA"/>
</dbReference>
<dbReference type="EMBL" id="U83997">
    <property type="protein sequence ID" value="AAC49898.1"/>
    <property type="molecule type" value="mRNA"/>
</dbReference>
<dbReference type="RefSeq" id="XP_715420.2">
    <property type="nucleotide sequence ID" value="XM_710327.2"/>
</dbReference>
<dbReference type="SMR" id="P87020"/>
<dbReference type="BioGRID" id="1225932">
    <property type="interactions" value="5"/>
</dbReference>
<dbReference type="FunCoup" id="P87020">
    <property type="interactions" value="26"/>
</dbReference>
<dbReference type="STRING" id="237561.P87020"/>
<dbReference type="TCDB" id="2.A.5.1.15">
    <property type="family name" value="the zinc (zn(2+))-iron (fe(2+)) permease (zip) family"/>
</dbReference>
<dbReference type="GlyCosmos" id="P87020">
    <property type="glycosylation" value="4 sites, No reported glycans"/>
</dbReference>
<dbReference type="EnsemblFungi" id="C4_06980W_A-T">
    <property type="protein sequence ID" value="C4_06980W_A-T-p1"/>
    <property type="gene ID" value="C4_06980W_A"/>
</dbReference>
<dbReference type="GeneID" id="3642969"/>
<dbReference type="KEGG" id="cal:CAALFM_C406980WA"/>
<dbReference type="CGD" id="CAL0000174610">
    <property type="gene designation" value="PRA1"/>
</dbReference>
<dbReference type="VEuPathDB" id="FungiDB:C4_06980W_A"/>
<dbReference type="eggNOG" id="ENOG502RTN8">
    <property type="taxonomic scope" value="Eukaryota"/>
</dbReference>
<dbReference type="HOGENOM" id="CLU_048223_0_0_1"/>
<dbReference type="InParanoid" id="P87020"/>
<dbReference type="OrthoDB" id="4689212at2759"/>
<dbReference type="PRO" id="PR:P87020"/>
<dbReference type="Proteomes" id="UP000000559">
    <property type="component" value="Chromosome 4"/>
</dbReference>
<dbReference type="GO" id="GO:0009986">
    <property type="term" value="C:cell surface"/>
    <property type="evidence" value="ECO:0000314"/>
    <property type="project" value="CGD"/>
</dbReference>
<dbReference type="GO" id="GO:0005576">
    <property type="term" value="C:extracellular region"/>
    <property type="evidence" value="ECO:0000314"/>
    <property type="project" value="CGD"/>
</dbReference>
<dbReference type="GO" id="GO:0009277">
    <property type="term" value="C:fungal-type cell wall"/>
    <property type="evidence" value="ECO:0000314"/>
    <property type="project" value="CGD"/>
</dbReference>
<dbReference type="GO" id="GO:0030446">
    <property type="term" value="C:hyphal cell wall"/>
    <property type="evidence" value="ECO:0000314"/>
    <property type="project" value="CGD"/>
</dbReference>
<dbReference type="GO" id="GO:0001411">
    <property type="term" value="C:hyphal tip"/>
    <property type="evidence" value="ECO:0000314"/>
    <property type="project" value="CGD"/>
</dbReference>
<dbReference type="GO" id="GO:0070051">
    <property type="term" value="F:fibrinogen binding"/>
    <property type="evidence" value="ECO:0000314"/>
    <property type="project" value="CGD"/>
</dbReference>
<dbReference type="GO" id="GO:0030985">
    <property type="term" value="F:high molecular weight kininogen binding"/>
    <property type="evidence" value="ECO:0000314"/>
    <property type="project" value="CGD"/>
</dbReference>
<dbReference type="GO" id="GO:0005178">
    <property type="term" value="F:integrin binding"/>
    <property type="evidence" value="ECO:0000314"/>
    <property type="project" value="CGD"/>
</dbReference>
<dbReference type="GO" id="GO:0008237">
    <property type="term" value="F:metallopeptidase activity"/>
    <property type="evidence" value="ECO:0007669"/>
    <property type="project" value="InterPro"/>
</dbReference>
<dbReference type="GO" id="GO:0008270">
    <property type="term" value="F:zinc ion binding"/>
    <property type="evidence" value="ECO:0000314"/>
    <property type="project" value="CGD"/>
</dbReference>
<dbReference type="GO" id="GO:0044406">
    <property type="term" value="P:adhesion of symbiont to host"/>
    <property type="evidence" value="ECO:0000314"/>
    <property type="project" value="CGD"/>
</dbReference>
<dbReference type="GO" id="GO:0141018">
    <property type="term" value="P:adhesion of symbiont to host via host extracellular matrix"/>
    <property type="evidence" value="ECO:0000269"/>
    <property type="project" value="SigSci"/>
</dbReference>
<dbReference type="GO" id="GO:0044847">
    <property type="term" value="P:iron acquisition from host"/>
    <property type="evidence" value="ECO:0000314"/>
    <property type="project" value="GO_Central"/>
</dbReference>
<dbReference type="GO" id="GO:0007159">
    <property type="term" value="P:leukocyte cell-cell adhesion"/>
    <property type="evidence" value="ECO:0000314"/>
    <property type="project" value="CGD"/>
</dbReference>
<dbReference type="GO" id="GO:0045916">
    <property type="term" value="P:negative regulation of complement activation"/>
    <property type="evidence" value="ECO:0000314"/>
    <property type="project" value="CGD"/>
</dbReference>
<dbReference type="GO" id="GO:0042783">
    <property type="term" value="P:symbiont-mediated evasion of host immune response"/>
    <property type="evidence" value="ECO:0000353"/>
    <property type="project" value="CGD"/>
</dbReference>
<dbReference type="GO" id="GO:0052156">
    <property type="term" value="P:symbiont-mediated perturbation of host T-cell mediated immune response"/>
    <property type="evidence" value="ECO:0000314"/>
    <property type="project" value="CGD"/>
</dbReference>
<dbReference type="GO" id="GO:0042784">
    <property type="term" value="P:symbiont-mediated suppression of host complement activation"/>
    <property type="evidence" value="ECO:0000269"/>
    <property type="project" value="SigSci"/>
</dbReference>
<dbReference type="GO" id="GO:0141203">
    <property type="term" value="P:symbiont-mediated suppression of host complement activation by activation of host proteases"/>
    <property type="evidence" value="ECO:0000269"/>
    <property type="project" value="SigSci"/>
</dbReference>
<dbReference type="GO" id="GO:0141117">
    <property type="term" value="P:symbiont-mediated suppression of host complement activation by recruitment of complement control protein"/>
    <property type="evidence" value="ECO:0000269"/>
    <property type="project" value="SigSci"/>
</dbReference>
<dbReference type="GO" id="GO:0052085">
    <property type="term" value="P:symbiont-mediated suppression of host T-cell mediated immune response"/>
    <property type="evidence" value="ECO:0000314"/>
    <property type="project" value="CGD"/>
</dbReference>
<dbReference type="CDD" id="cd11307">
    <property type="entry name" value="M35_Asp_f2_like"/>
    <property type="match status" value="1"/>
</dbReference>
<dbReference type="FunFam" id="3.40.390.10:FF:000043">
    <property type="entry name" value="Major allergen Asp F2"/>
    <property type="match status" value="1"/>
</dbReference>
<dbReference type="Gene3D" id="3.40.390.10">
    <property type="entry name" value="Collagenase (Catalytic Domain)"/>
    <property type="match status" value="1"/>
</dbReference>
<dbReference type="InterPro" id="IPR029482">
    <property type="entry name" value="HRXXH"/>
</dbReference>
<dbReference type="InterPro" id="IPR024079">
    <property type="entry name" value="MetalloPept_cat_dom_sf"/>
</dbReference>
<dbReference type="InterPro" id="IPR039124">
    <property type="entry name" value="PRA1-like"/>
</dbReference>
<dbReference type="PANTHER" id="PTHR39399">
    <property type="entry name" value="PROTEIN ZPS1"/>
    <property type="match status" value="1"/>
</dbReference>
<dbReference type="PANTHER" id="PTHR39399:SF1">
    <property type="entry name" value="PROTEIN ZPS1"/>
    <property type="match status" value="1"/>
</dbReference>
<dbReference type="Pfam" id="PF13933">
    <property type="entry name" value="HRXXH"/>
    <property type="match status" value="1"/>
</dbReference>
<dbReference type="SUPFAM" id="SSF55486">
    <property type="entry name" value="Metalloproteases ('zincins'), catalytic domain"/>
    <property type="match status" value="1"/>
</dbReference>